<keyword id="KW-0067">ATP-binding</keyword>
<keyword id="KW-0963">Cytoplasm</keyword>
<keyword id="KW-0275">Fatty acid biosynthesis</keyword>
<keyword id="KW-0276">Fatty acid metabolism</keyword>
<keyword id="KW-0444">Lipid biosynthesis</keyword>
<keyword id="KW-0443">Lipid metabolism</keyword>
<keyword id="KW-0547">Nucleotide-binding</keyword>
<keyword id="KW-0808">Transferase</keyword>
<name>ACCA_HELPH</name>
<dbReference type="EC" id="2.1.3.15" evidence="1"/>
<dbReference type="EMBL" id="CP000241">
    <property type="protein sequence ID" value="ABF84602.1"/>
    <property type="molecule type" value="Genomic_DNA"/>
</dbReference>
<dbReference type="RefSeq" id="WP_001029388.1">
    <property type="nucleotide sequence ID" value="NC_008086.1"/>
</dbReference>
<dbReference type="SMR" id="Q1CTX0"/>
<dbReference type="KEGG" id="hpa:HPAG1_0535"/>
<dbReference type="HOGENOM" id="CLU_015486_0_2_7"/>
<dbReference type="UniPathway" id="UPA00655">
    <property type="reaction ID" value="UER00711"/>
</dbReference>
<dbReference type="GO" id="GO:0009317">
    <property type="term" value="C:acetyl-CoA carboxylase complex"/>
    <property type="evidence" value="ECO:0007669"/>
    <property type="project" value="InterPro"/>
</dbReference>
<dbReference type="GO" id="GO:0003989">
    <property type="term" value="F:acetyl-CoA carboxylase activity"/>
    <property type="evidence" value="ECO:0007669"/>
    <property type="project" value="InterPro"/>
</dbReference>
<dbReference type="GO" id="GO:0005524">
    <property type="term" value="F:ATP binding"/>
    <property type="evidence" value="ECO:0007669"/>
    <property type="project" value="UniProtKB-KW"/>
</dbReference>
<dbReference type="GO" id="GO:0016743">
    <property type="term" value="F:carboxyl- or carbamoyltransferase activity"/>
    <property type="evidence" value="ECO:0007669"/>
    <property type="project" value="UniProtKB-UniRule"/>
</dbReference>
<dbReference type="GO" id="GO:0006633">
    <property type="term" value="P:fatty acid biosynthetic process"/>
    <property type="evidence" value="ECO:0007669"/>
    <property type="project" value="UniProtKB-KW"/>
</dbReference>
<dbReference type="GO" id="GO:2001295">
    <property type="term" value="P:malonyl-CoA biosynthetic process"/>
    <property type="evidence" value="ECO:0007669"/>
    <property type="project" value="UniProtKB-UniRule"/>
</dbReference>
<dbReference type="Gene3D" id="3.90.226.10">
    <property type="entry name" value="2-enoyl-CoA Hydratase, Chain A, domain 1"/>
    <property type="match status" value="1"/>
</dbReference>
<dbReference type="HAMAP" id="MF_00823">
    <property type="entry name" value="AcetylCoA_CT_alpha"/>
    <property type="match status" value="1"/>
</dbReference>
<dbReference type="InterPro" id="IPR001095">
    <property type="entry name" value="Acetyl_CoA_COase_a_su"/>
</dbReference>
<dbReference type="InterPro" id="IPR029045">
    <property type="entry name" value="ClpP/crotonase-like_dom_sf"/>
</dbReference>
<dbReference type="InterPro" id="IPR011763">
    <property type="entry name" value="COA_CT_C"/>
</dbReference>
<dbReference type="NCBIfam" id="TIGR00513">
    <property type="entry name" value="accA"/>
    <property type="match status" value="1"/>
</dbReference>
<dbReference type="NCBIfam" id="NF041504">
    <property type="entry name" value="AccA_sub"/>
    <property type="match status" value="1"/>
</dbReference>
<dbReference type="NCBIfam" id="NF004344">
    <property type="entry name" value="PRK05724.1"/>
    <property type="match status" value="1"/>
</dbReference>
<dbReference type="PANTHER" id="PTHR42853">
    <property type="entry name" value="ACETYL-COENZYME A CARBOXYLASE CARBOXYL TRANSFERASE SUBUNIT ALPHA"/>
    <property type="match status" value="1"/>
</dbReference>
<dbReference type="PANTHER" id="PTHR42853:SF3">
    <property type="entry name" value="ACETYL-COENZYME A CARBOXYLASE CARBOXYL TRANSFERASE SUBUNIT ALPHA, CHLOROPLASTIC"/>
    <property type="match status" value="1"/>
</dbReference>
<dbReference type="Pfam" id="PF03255">
    <property type="entry name" value="ACCA"/>
    <property type="match status" value="1"/>
</dbReference>
<dbReference type="PRINTS" id="PR01069">
    <property type="entry name" value="ACCCTRFRASEA"/>
</dbReference>
<dbReference type="SUPFAM" id="SSF52096">
    <property type="entry name" value="ClpP/crotonase"/>
    <property type="match status" value="1"/>
</dbReference>
<dbReference type="PROSITE" id="PS50989">
    <property type="entry name" value="COA_CT_CTER"/>
    <property type="match status" value="1"/>
</dbReference>
<protein>
    <recommendedName>
        <fullName evidence="1">Acetyl-coenzyme A carboxylase carboxyl transferase subunit alpha</fullName>
        <shortName evidence="1">ACCase subunit alpha</shortName>
        <shortName evidence="1">Acetyl-CoA carboxylase carboxyltransferase subunit alpha</shortName>
        <ecNumber evidence="1">2.1.3.15</ecNumber>
    </recommendedName>
</protein>
<gene>
    <name evidence="1" type="primary">accA</name>
    <name type="ordered locus">HPAG1_0535</name>
</gene>
<proteinExistence type="inferred from homology"/>
<organism>
    <name type="scientific">Helicobacter pylori (strain HPAG1)</name>
    <dbReference type="NCBI Taxonomy" id="357544"/>
    <lineage>
        <taxon>Bacteria</taxon>
        <taxon>Pseudomonadati</taxon>
        <taxon>Campylobacterota</taxon>
        <taxon>Epsilonproteobacteria</taxon>
        <taxon>Campylobacterales</taxon>
        <taxon>Helicobacteraceae</taxon>
        <taxon>Helicobacter</taxon>
    </lineage>
</organism>
<reference key="1">
    <citation type="journal article" date="2006" name="Proc. Natl. Acad. Sci. U.S.A.">
        <title>The complete genome sequence of a chronic atrophic gastritis Helicobacter pylori strain: evolution during disease progression.</title>
        <authorList>
            <person name="Oh J.D."/>
            <person name="Kling-Baeckhed H."/>
            <person name="Giannakis M."/>
            <person name="Xu J."/>
            <person name="Fulton R.S."/>
            <person name="Fulton L.A."/>
            <person name="Cordum H.S."/>
            <person name="Wang C."/>
            <person name="Elliott G."/>
            <person name="Edwards J."/>
            <person name="Mardis E.R."/>
            <person name="Engstrand L.G."/>
            <person name="Gordon J.I."/>
        </authorList>
    </citation>
    <scope>NUCLEOTIDE SEQUENCE [LARGE SCALE GENOMIC DNA]</scope>
    <source>
        <strain>HPAG1</strain>
    </source>
</reference>
<sequence length="312" mass="34923">MAIYLDFENHIKEIQNEIELALIRGDEDAKEILEKRLDKEVKSIYSNLTDFQKLQLARHPDRPYAMDYIDLILKDKYEVFGDRHYNDDKAIVCFIGKIDNVPVVVIGEEKGRGTKNKLLRNFGMPNPCGYRKALKMAKFAEKFNLPILMLVDTAGAYPGIGAEERGQSEAIAKNLQEFASLKVPTISVIIGEGGSGGALAIAVADKLAMMEYSIFSVISPEGCAAILWDDPSKTEVAIKAMKITPRDLKEAGLIDDIILEPSKGAHRDKFSAANTIKEYFLDALRTIQQDPHFLENRYQKLMSLGSFVESMN</sequence>
<comment type="function">
    <text evidence="1">Component of the acetyl coenzyme A carboxylase (ACC) complex. First, biotin carboxylase catalyzes the carboxylation of biotin on its carrier protein (BCCP) and then the CO(2) group is transferred by the carboxyltransferase to acetyl-CoA to form malonyl-CoA.</text>
</comment>
<comment type="catalytic activity">
    <reaction evidence="1">
        <text>N(6)-carboxybiotinyl-L-lysyl-[protein] + acetyl-CoA = N(6)-biotinyl-L-lysyl-[protein] + malonyl-CoA</text>
        <dbReference type="Rhea" id="RHEA:54728"/>
        <dbReference type="Rhea" id="RHEA-COMP:10505"/>
        <dbReference type="Rhea" id="RHEA-COMP:10506"/>
        <dbReference type="ChEBI" id="CHEBI:57288"/>
        <dbReference type="ChEBI" id="CHEBI:57384"/>
        <dbReference type="ChEBI" id="CHEBI:83144"/>
        <dbReference type="ChEBI" id="CHEBI:83145"/>
        <dbReference type="EC" id="2.1.3.15"/>
    </reaction>
</comment>
<comment type="pathway">
    <text evidence="1">Lipid metabolism; malonyl-CoA biosynthesis; malonyl-CoA from acetyl-CoA: step 1/1.</text>
</comment>
<comment type="subunit">
    <text evidence="1">Acetyl-CoA carboxylase is a heterohexamer composed of biotin carboxyl carrier protein (AccB), biotin carboxylase (AccC) and two subunits each of ACCase subunit alpha (AccA) and ACCase subunit beta (AccD).</text>
</comment>
<comment type="subcellular location">
    <subcellularLocation>
        <location evidence="1">Cytoplasm</location>
    </subcellularLocation>
</comment>
<comment type="similarity">
    <text evidence="1">Belongs to the AccA family.</text>
</comment>
<feature type="chain" id="PRO_1000062631" description="Acetyl-coenzyme A carboxylase carboxyl transferase subunit alpha">
    <location>
        <begin position="1"/>
        <end position="312"/>
    </location>
</feature>
<feature type="domain" description="CoA carboxyltransferase C-terminal" evidence="2">
    <location>
        <begin position="36"/>
        <end position="286"/>
    </location>
</feature>
<accession>Q1CTX0</accession>
<evidence type="ECO:0000255" key="1">
    <source>
        <dbReference type="HAMAP-Rule" id="MF_00823"/>
    </source>
</evidence>
<evidence type="ECO:0000255" key="2">
    <source>
        <dbReference type="PROSITE-ProRule" id="PRU01137"/>
    </source>
</evidence>